<name>ABGA_CLOLO</name>
<sequence length="473" mass="54414">MSFDLSFPKSFLWGGATAANQFEGAYNEDGKGLSIQDIAPKGVMGPITEVPTEDNMKLIGIDFYHRYKEDIKLFAEMGFKTFRLSIAWSRIFPNGDDEIPNEKGLEFYDKVFDELQRYGIEPLVTLSHYETPLNLSKKYNGWANRDLIGFYERYVRTVFTRYKDKVKYWLTFNEINSAIHAPYMSAGIWTDKSELSKQDLYQAMHHELVASALAVKIGHEINPDFKIGCMILGIPVYPLTPHPDDLIEKMRVERESLFFADVHARGKYPRYMNRLFKENNIEIKWHEDDAEILSNVVDFISFSYYMSSCATADEEKKKAGAGNLLAGVPNPYLKASEWGWQIDPKGLRLILNELYDRYEKPLFIVENGLGAVDELVTDENGNKTVNDDYRIKYLNDHLVQVAEAIEDGVELMGYTTWGCIDLVSASTAELKKRYGFIYVDRHDDGSGTLERYKKKSFNWYKEVIATNGKSLER</sequence>
<accession>Q46130</accession>
<feature type="chain" id="PRO_0000063894" description="6-phospho-beta-glucosidase">
    <location>
        <begin position="1"/>
        <end position="473"/>
    </location>
</feature>
<feature type="active site" description="Proton donor" evidence="1">
    <location>
        <position position="174"/>
    </location>
</feature>
<feature type="active site" description="Nucleophile" evidence="2">
    <location>
        <position position="366"/>
    </location>
</feature>
<dbReference type="EC" id="3.2.1.86"/>
<dbReference type="EMBL" id="L49336">
    <property type="protein sequence ID" value="AAC05714.1"/>
    <property type="molecule type" value="Genomic_DNA"/>
</dbReference>
<dbReference type="SMR" id="Q46130"/>
<dbReference type="CAZy" id="GH1">
    <property type="family name" value="Glycoside Hydrolase Family 1"/>
</dbReference>
<dbReference type="GO" id="GO:0005829">
    <property type="term" value="C:cytosol"/>
    <property type="evidence" value="ECO:0007669"/>
    <property type="project" value="TreeGrafter"/>
</dbReference>
<dbReference type="GO" id="GO:0008706">
    <property type="term" value="F:6-phospho-beta-glucosidase activity"/>
    <property type="evidence" value="ECO:0007669"/>
    <property type="project" value="UniProtKB-EC"/>
</dbReference>
<dbReference type="GO" id="GO:0016052">
    <property type="term" value="P:carbohydrate catabolic process"/>
    <property type="evidence" value="ECO:0007669"/>
    <property type="project" value="TreeGrafter"/>
</dbReference>
<dbReference type="FunFam" id="3.20.20.80:FF:000004">
    <property type="entry name" value="Beta-glucosidase 6-phospho-beta-glucosidase"/>
    <property type="match status" value="1"/>
</dbReference>
<dbReference type="Gene3D" id="3.20.20.80">
    <property type="entry name" value="Glycosidases"/>
    <property type="match status" value="1"/>
</dbReference>
<dbReference type="InterPro" id="IPR001360">
    <property type="entry name" value="Glyco_hydro_1"/>
</dbReference>
<dbReference type="InterPro" id="IPR018120">
    <property type="entry name" value="Glyco_hydro_1_AS"/>
</dbReference>
<dbReference type="InterPro" id="IPR033132">
    <property type="entry name" value="Glyco_hydro_1_N_CS"/>
</dbReference>
<dbReference type="InterPro" id="IPR017853">
    <property type="entry name" value="Glycoside_hydrolase_SF"/>
</dbReference>
<dbReference type="NCBIfam" id="NF007158">
    <property type="entry name" value="PRK09593.1"/>
    <property type="match status" value="1"/>
</dbReference>
<dbReference type="NCBIfam" id="NF007356">
    <property type="entry name" value="PRK09852.1"/>
    <property type="match status" value="1"/>
</dbReference>
<dbReference type="PANTHER" id="PTHR10353:SF122">
    <property type="entry name" value="6-PHOSPHO-BETA-GLUCOSIDASE ASCB-RELATED"/>
    <property type="match status" value="1"/>
</dbReference>
<dbReference type="PANTHER" id="PTHR10353">
    <property type="entry name" value="GLYCOSYL HYDROLASE"/>
    <property type="match status" value="1"/>
</dbReference>
<dbReference type="Pfam" id="PF00232">
    <property type="entry name" value="Glyco_hydro_1"/>
    <property type="match status" value="1"/>
</dbReference>
<dbReference type="PRINTS" id="PR00131">
    <property type="entry name" value="GLHYDRLASE1"/>
</dbReference>
<dbReference type="SUPFAM" id="SSF51445">
    <property type="entry name" value="(Trans)glycosidases"/>
    <property type="match status" value="1"/>
</dbReference>
<dbReference type="PROSITE" id="PS00572">
    <property type="entry name" value="GLYCOSYL_HYDROL_F1_1"/>
    <property type="match status" value="1"/>
</dbReference>
<dbReference type="PROSITE" id="PS00653">
    <property type="entry name" value="GLYCOSYL_HYDROL_F1_2"/>
    <property type="match status" value="1"/>
</dbReference>
<proteinExistence type="inferred from homology"/>
<keyword id="KW-0326">Glycosidase</keyword>
<keyword id="KW-0378">Hydrolase</keyword>
<reference key="1">
    <citation type="submission" date="1995-12" db="EMBL/GenBank/DDBJ databases">
        <authorList>
            <person name="Brown G.D."/>
            <person name="Thomson J.A."/>
        </authorList>
    </citation>
    <scope>NUCLEOTIDE SEQUENCE [GENOMIC DNA]</scope>
    <source>
        <strain>B6405</strain>
    </source>
</reference>
<gene>
    <name type="primary">abgA</name>
</gene>
<evidence type="ECO:0000255" key="1"/>
<evidence type="ECO:0000255" key="2">
    <source>
        <dbReference type="PROSITE-ProRule" id="PRU10055"/>
    </source>
</evidence>
<evidence type="ECO:0000305" key="3"/>
<protein>
    <recommendedName>
        <fullName>6-phospho-beta-glucosidase</fullName>
        <ecNumber>3.2.1.86</ecNumber>
    </recommendedName>
</protein>
<comment type="catalytic activity">
    <reaction>
        <text>6-phospho-beta-D-glucosyl-(1-&gt;4)-D-glucose + H2O = D-glucose 6-phosphate + D-glucose</text>
        <dbReference type="Rhea" id="RHEA:10772"/>
        <dbReference type="ChEBI" id="CHEBI:4167"/>
        <dbReference type="ChEBI" id="CHEBI:15377"/>
        <dbReference type="ChEBI" id="CHEBI:58312"/>
        <dbReference type="ChEBI" id="CHEBI:61548"/>
        <dbReference type="EC" id="3.2.1.86"/>
    </reaction>
</comment>
<comment type="similarity">
    <text evidence="3">Belongs to the glycosyl hydrolase 1 family.</text>
</comment>
<organism>
    <name type="scientific">Clostridium longisporum</name>
    <dbReference type="NCBI Taxonomy" id="1523"/>
    <lineage>
        <taxon>Bacteria</taxon>
        <taxon>Bacillati</taxon>
        <taxon>Bacillota</taxon>
        <taxon>Clostridia</taxon>
        <taxon>Eubacteriales</taxon>
        <taxon>Clostridiaceae</taxon>
        <taxon>Clostridium</taxon>
    </lineage>
</organism>